<reference key="1">
    <citation type="journal article" date="2005" name="J. Bacteriol.">
        <title>Swine and poultry pathogens: the complete genome sequences of two strains of Mycoplasma hyopneumoniae and a strain of Mycoplasma synoviae.</title>
        <authorList>
            <person name="Vasconcelos A.T.R."/>
            <person name="Ferreira H.B."/>
            <person name="Bizarro C.V."/>
            <person name="Bonatto S.L."/>
            <person name="Carvalho M.O."/>
            <person name="Pinto P.M."/>
            <person name="Almeida D.F."/>
            <person name="Almeida L.G.P."/>
            <person name="Almeida R."/>
            <person name="Alves-Junior L."/>
            <person name="Assuncao E.N."/>
            <person name="Azevedo V.A.C."/>
            <person name="Bogo M.R."/>
            <person name="Brigido M.M."/>
            <person name="Brocchi M."/>
            <person name="Burity H.A."/>
            <person name="Camargo A.A."/>
            <person name="Camargo S.S."/>
            <person name="Carepo M.S."/>
            <person name="Carraro D.M."/>
            <person name="de Mattos Cascardo J.C."/>
            <person name="Castro L.A."/>
            <person name="Cavalcanti G."/>
            <person name="Chemale G."/>
            <person name="Collevatti R.G."/>
            <person name="Cunha C.W."/>
            <person name="Dallagiovanna B."/>
            <person name="Dambros B.P."/>
            <person name="Dellagostin O.A."/>
            <person name="Falcao C."/>
            <person name="Fantinatti-Garboggini F."/>
            <person name="Felipe M.S.S."/>
            <person name="Fiorentin L."/>
            <person name="Franco G.R."/>
            <person name="Freitas N.S.A."/>
            <person name="Frias D."/>
            <person name="Grangeiro T.B."/>
            <person name="Grisard E.C."/>
            <person name="Guimaraes C.T."/>
            <person name="Hungria M."/>
            <person name="Jardim S.N."/>
            <person name="Krieger M.A."/>
            <person name="Laurino J.P."/>
            <person name="Lima L.F.A."/>
            <person name="Lopes M.I."/>
            <person name="Loreto E.L.S."/>
            <person name="Madeira H.M.F."/>
            <person name="Manfio G.P."/>
            <person name="Maranhao A.Q."/>
            <person name="Martinkovics C.T."/>
            <person name="Medeiros S.R.B."/>
            <person name="Moreira M.A.M."/>
            <person name="Neiva M."/>
            <person name="Ramalho-Neto C.E."/>
            <person name="Nicolas M.F."/>
            <person name="Oliveira S.C."/>
            <person name="Paixao R.F.C."/>
            <person name="Pedrosa F.O."/>
            <person name="Pena S.D.J."/>
            <person name="Pereira M."/>
            <person name="Pereira-Ferrari L."/>
            <person name="Piffer I."/>
            <person name="Pinto L.S."/>
            <person name="Potrich D.P."/>
            <person name="Salim A.C.M."/>
            <person name="Santos F.R."/>
            <person name="Schmitt R."/>
            <person name="Schneider M.P.C."/>
            <person name="Schrank A."/>
            <person name="Schrank I.S."/>
            <person name="Schuck A.F."/>
            <person name="Seuanez H.N."/>
            <person name="Silva D.W."/>
            <person name="Silva R."/>
            <person name="Silva S.C."/>
            <person name="Soares C.M.A."/>
            <person name="Souza K.R.L."/>
            <person name="Souza R.C."/>
            <person name="Staats C.C."/>
            <person name="Steffens M.B.R."/>
            <person name="Teixeira S.M.R."/>
            <person name="Urmenyi T.P."/>
            <person name="Vainstein M.H."/>
            <person name="Zuccherato L.W."/>
            <person name="Simpson A.J.G."/>
            <person name="Zaha A."/>
        </authorList>
    </citation>
    <scope>NUCLEOTIDE SEQUENCE [LARGE SCALE GENOMIC DNA]</scope>
    <source>
        <strain>7448</strain>
    </source>
</reference>
<proteinExistence type="inferred from homology"/>
<organism>
    <name type="scientific">Mesomycoplasma hyopneumoniae (strain 7448)</name>
    <name type="common">Mycoplasma hyopneumoniae</name>
    <dbReference type="NCBI Taxonomy" id="262722"/>
    <lineage>
        <taxon>Bacteria</taxon>
        <taxon>Bacillati</taxon>
        <taxon>Mycoplasmatota</taxon>
        <taxon>Mycoplasmoidales</taxon>
        <taxon>Metamycoplasmataceae</taxon>
        <taxon>Mesomycoplasma</taxon>
    </lineage>
</organism>
<protein>
    <recommendedName>
        <fullName evidence="1">Valine--tRNA ligase</fullName>
        <ecNumber evidence="1">6.1.1.9</ecNumber>
    </recommendedName>
    <alternativeName>
        <fullName evidence="1">Valyl-tRNA synthetase</fullName>
        <shortName evidence="1">ValRS</shortName>
    </alternativeName>
</protein>
<gene>
    <name evidence="1" type="primary">valS</name>
    <name type="ordered locus">MHP7448_0672</name>
</gene>
<sequence>MKNKYDFKLVEEKRNEKWQKKGFFIAPKQTKKPFSIISPPPNVTGQLHLGHSWNAFIQDSLVRYHKLQGFDVLLLPSVDHAGIATQVKVEEDLAKKGIKKSDLKREEFIKKCYHWKEKQYLKIKEQWDKLGICYDFSKERFTLDQDAQIAVSDFFIKLWEKNLIYRGQKAINWDIKLQTAISNIEVINKPVEQKMYYLKYFLENSNEFLTVATTRIETISSDVALAINPKDKRYLHLVGKKVVHPLTKKLIIIIADSNVSSDFGSGIMKVSAHSILDFEIMEKHNLESKDCIDNYGNLNHEVPEFQGQNRFFARDLIAKKLEKEGFLAKIETVISNVGFSQRSDEIVEILKKPQWFVKMDELAKSLISHLNSKDKIKFYPKNFEKNLRKWFEKIHDWTISRQLWWGHRIPVWCKNDEFKVQIDSPGQGWIQDEDVLDTWFSSGISAFAFLGWPQNFDLIKSYFPTSLLVTGWDILFFWVARMYFSSLFIMKQKPFEKVLLHGLIRDEIGRKMSKSLGNGLDPMEIIEKYGSDTLRQALIFNSSPGKDIKFNIEKLNTAWNLNNKIWNIAKYIADLDTFFAKPDLIDLWMENKIYILKRQIVKNIKKYNFSVIGTEINNFIYGDFSSRYIELIKTRKNGFYARKLLRKVLIILHPFLPFLTDFLMEKIFKMEILEQKMPRIRQFKENQKVENILEIIDNLRTYREKFQISKKIILEYCIINDKFSNAEIDIINKLTFGKWLENKELVIKTKNFEIAIKVPEELKKEQKGRELKEIQFLKSEILRAEKILTNKGFLEKAPREKIDLERTKLEKLKEKLAFYEKK</sequence>
<comment type="function">
    <text evidence="1">Catalyzes the attachment of valine to tRNA(Val). As ValRS can inadvertently accommodate and process structurally similar amino acids such as threonine, to avoid such errors, it has a 'posttransfer' editing activity that hydrolyzes mischarged Thr-tRNA(Val) in a tRNA-dependent manner.</text>
</comment>
<comment type="catalytic activity">
    <reaction evidence="1">
        <text>tRNA(Val) + L-valine + ATP = L-valyl-tRNA(Val) + AMP + diphosphate</text>
        <dbReference type="Rhea" id="RHEA:10704"/>
        <dbReference type="Rhea" id="RHEA-COMP:9672"/>
        <dbReference type="Rhea" id="RHEA-COMP:9708"/>
        <dbReference type="ChEBI" id="CHEBI:30616"/>
        <dbReference type="ChEBI" id="CHEBI:33019"/>
        <dbReference type="ChEBI" id="CHEBI:57762"/>
        <dbReference type="ChEBI" id="CHEBI:78442"/>
        <dbReference type="ChEBI" id="CHEBI:78537"/>
        <dbReference type="ChEBI" id="CHEBI:456215"/>
        <dbReference type="EC" id="6.1.1.9"/>
    </reaction>
</comment>
<comment type="subunit">
    <text evidence="1">Monomer.</text>
</comment>
<comment type="subcellular location">
    <subcellularLocation>
        <location evidence="1">Cytoplasm</location>
    </subcellularLocation>
</comment>
<comment type="domain">
    <text evidence="1">ValRS has two distinct active sites: one for aminoacylation and one for editing. The misactivated threonine is translocated from the active site to the editing site.</text>
</comment>
<comment type="domain">
    <text evidence="1">The C-terminal coiled-coil domain is crucial for aminoacylation activity.</text>
</comment>
<comment type="similarity">
    <text evidence="1">Belongs to the class-I aminoacyl-tRNA synthetase family. ValS type 1 subfamily.</text>
</comment>
<evidence type="ECO:0000255" key="1">
    <source>
        <dbReference type="HAMAP-Rule" id="MF_02004"/>
    </source>
</evidence>
<keyword id="KW-0030">Aminoacyl-tRNA synthetase</keyword>
<keyword id="KW-0067">ATP-binding</keyword>
<keyword id="KW-0175">Coiled coil</keyword>
<keyword id="KW-0963">Cytoplasm</keyword>
<keyword id="KW-0436">Ligase</keyword>
<keyword id="KW-0547">Nucleotide-binding</keyword>
<keyword id="KW-0648">Protein biosynthesis</keyword>
<name>SYV_MESH7</name>
<accession>Q4A755</accession>
<feature type="chain" id="PRO_0000224509" description="Valine--tRNA ligase">
    <location>
        <begin position="1"/>
        <end position="822"/>
    </location>
</feature>
<feature type="coiled-coil region" evidence="1">
    <location>
        <begin position="765"/>
        <end position="822"/>
    </location>
</feature>
<feature type="short sequence motif" description="'HIGH' region">
    <location>
        <begin position="41"/>
        <end position="51"/>
    </location>
</feature>
<feature type="short sequence motif" description="'KMSKS' region">
    <location>
        <begin position="511"/>
        <end position="515"/>
    </location>
</feature>
<feature type="binding site" evidence="1">
    <location>
        <position position="514"/>
    </location>
    <ligand>
        <name>ATP</name>
        <dbReference type="ChEBI" id="CHEBI:30616"/>
    </ligand>
</feature>
<dbReference type="EC" id="6.1.1.9" evidence="1"/>
<dbReference type="EMBL" id="AE017244">
    <property type="protein sequence ID" value="AAZ54034.1"/>
    <property type="molecule type" value="Genomic_DNA"/>
</dbReference>
<dbReference type="RefSeq" id="WP_011290445.1">
    <property type="nucleotide sequence ID" value="NC_007332.1"/>
</dbReference>
<dbReference type="SMR" id="Q4A755"/>
<dbReference type="KEGG" id="mhp:MHP7448_0672"/>
<dbReference type="HOGENOM" id="CLU_001493_0_2_14"/>
<dbReference type="Proteomes" id="UP000000553">
    <property type="component" value="Chromosome"/>
</dbReference>
<dbReference type="GO" id="GO:0005829">
    <property type="term" value="C:cytosol"/>
    <property type="evidence" value="ECO:0007669"/>
    <property type="project" value="TreeGrafter"/>
</dbReference>
<dbReference type="GO" id="GO:0002161">
    <property type="term" value="F:aminoacyl-tRNA deacylase activity"/>
    <property type="evidence" value="ECO:0007669"/>
    <property type="project" value="InterPro"/>
</dbReference>
<dbReference type="GO" id="GO:0005524">
    <property type="term" value="F:ATP binding"/>
    <property type="evidence" value="ECO:0007669"/>
    <property type="project" value="UniProtKB-UniRule"/>
</dbReference>
<dbReference type="GO" id="GO:0004832">
    <property type="term" value="F:valine-tRNA ligase activity"/>
    <property type="evidence" value="ECO:0007669"/>
    <property type="project" value="UniProtKB-UniRule"/>
</dbReference>
<dbReference type="GO" id="GO:0006438">
    <property type="term" value="P:valyl-tRNA aminoacylation"/>
    <property type="evidence" value="ECO:0007669"/>
    <property type="project" value="UniProtKB-UniRule"/>
</dbReference>
<dbReference type="CDD" id="cd07962">
    <property type="entry name" value="Anticodon_Ia_Val"/>
    <property type="match status" value="1"/>
</dbReference>
<dbReference type="CDD" id="cd00817">
    <property type="entry name" value="ValRS_core"/>
    <property type="match status" value="1"/>
</dbReference>
<dbReference type="Gene3D" id="3.40.50.620">
    <property type="entry name" value="HUPs"/>
    <property type="match status" value="2"/>
</dbReference>
<dbReference type="Gene3D" id="1.10.730.10">
    <property type="entry name" value="Isoleucyl-tRNA Synthetase, Domain 1"/>
    <property type="match status" value="1"/>
</dbReference>
<dbReference type="Gene3D" id="1.10.287.380">
    <property type="entry name" value="Valyl-tRNA synthetase, C-terminal domain"/>
    <property type="match status" value="1"/>
</dbReference>
<dbReference type="HAMAP" id="MF_02004">
    <property type="entry name" value="Val_tRNA_synth_type1"/>
    <property type="match status" value="1"/>
</dbReference>
<dbReference type="InterPro" id="IPR001412">
    <property type="entry name" value="aa-tRNA-synth_I_CS"/>
</dbReference>
<dbReference type="InterPro" id="IPR002300">
    <property type="entry name" value="aa-tRNA-synth_Ia"/>
</dbReference>
<dbReference type="InterPro" id="IPR033705">
    <property type="entry name" value="Anticodon_Ia_Val"/>
</dbReference>
<dbReference type="InterPro" id="IPR013155">
    <property type="entry name" value="M/V/L/I-tRNA-synth_anticd-bd"/>
</dbReference>
<dbReference type="InterPro" id="IPR014729">
    <property type="entry name" value="Rossmann-like_a/b/a_fold"/>
</dbReference>
<dbReference type="InterPro" id="IPR010978">
    <property type="entry name" value="tRNA-bd_arm"/>
</dbReference>
<dbReference type="InterPro" id="IPR009080">
    <property type="entry name" value="tRNAsynth_Ia_anticodon-bd"/>
</dbReference>
<dbReference type="InterPro" id="IPR037118">
    <property type="entry name" value="Val-tRNA_synth_C_sf"/>
</dbReference>
<dbReference type="InterPro" id="IPR009008">
    <property type="entry name" value="Val/Leu/Ile-tRNA-synth_edit"/>
</dbReference>
<dbReference type="InterPro" id="IPR002303">
    <property type="entry name" value="Valyl-tRNA_ligase"/>
</dbReference>
<dbReference type="NCBIfam" id="NF004349">
    <property type="entry name" value="PRK05729.1"/>
    <property type="match status" value="1"/>
</dbReference>
<dbReference type="NCBIfam" id="TIGR00422">
    <property type="entry name" value="valS"/>
    <property type="match status" value="1"/>
</dbReference>
<dbReference type="PANTHER" id="PTHR11946:SF93">
    <property type="entry name" value="VALINE--TRNA LIGASE, CHLOROPLASTIC_MITOCHONDRIAL 2"/>
    <property type="match status" value="1"/>
</dbReference>
<dbReference type="PANTHER" id="PTHR11946">
    <property type="entry name" value="VALYL-TRNA SYNTHETASES"/>
    <property type="match status" value="1"/>
</dbReference>
<dbReference type="Pfam" id="PF08264">
    <property type="entry name" value="Anticodon_1"/>
    <property type="match status" value="1"/>
</dbReference>
<dbReference type="Pfam" id="PF00133">
    <property type="entry name" value="tRNA-synt_1"/>
    <property type="match status" value="2"/>
</dbReference>
<dbReference type="PRINTS" id="PR00986">
    <property type="entry name" value="TRNASYNTHVAL"/>
</dbReference>
<dbReference type="SUPFAM" id="SSF47323">
    <property type="entry name" value="Anticodon-binding domain of a subclass of class I aminoacyl-tRNA synthetases"/>
    <property type="match status" value="1"/>
</dbReference>
<dbReference type="SUPFAM" id="SSF52374">
    <property type="entry name" value="Nucleotidylyl transferase"/>
    <property type="match status" value="1"/>
</dbReference>
<dbReference type="SUPFAM" id="SSF46589">
    <property type="entry name" value="tRNA-binding arm"/>
    <property type="match status" value="1"/>
</dbReference>
<dbReference type="SUPFAM" id="SSF50677">
    <property type="entry name" value="ValRS/IleRS/LeuRS editing domain"/>
    <property type="match status" value="1"/>
</dbReference>
<dbReference type="PROSITE" id="PS00178">
    <property type="entry name" value="AA_TRNA_LIGASE_I"/>
    <property type="match status" value="1"/>
</dbReference>